<name>SFH5_DEBHA</name>
<organism>
    <name type="scientific">Debaryomyces hansenii (strain ATCC 36239 / CBS 767 / BCRC 21394 / JCM 1990 / NBRC 0083 / IGC 2968)</name>
    <name type="common">Yeast</name>
    <name type="synonym">Torulaspora hansenii</name>
    <dbReference type="NCBI Taxonomy" id="284592"/>
    <lineage>
        <taxon>Eukaryota</taxon>
        <taxon>Fungi</taxon>
        <taxon>Dikarya</taxon>
        <taxon>Ascomycota</taxon>
        <taxon>Saccharomycotina</taxon>
        <taxon>Pichiomycetes</taxon>
        <taxon>Debaryomycetaceae</taxon>
        <taxon>Debaryomyces</taxon>
    </lineage>
</organism>
<accession>Q6BWE5</accession>
<gene>
    <name type="primary">SFH5</name>
    <name type="ordered locus">DEHA2B11968g</name>
</gene>
<protein>
    <recommendedName>
        <fullName>Phosphatidylinositol transfer protein SFH5</fullName>
        <shortName>PITP SFH5</shortName>
    </recommendedName>
</protein>
<sequence>MSETAVVEQPNDEVSTEKINASSVGDTIKSTELTADQKDKLEKLIGAVPEILKKTDNPKYDEIFGYCINVDTNEHVDVSIRNEILLKFLVADEYDVETAKTRLVNTLNWRNKFQPLSAAYEEEFDQELDQLGVITGNPDGNSNMKYVTWNLYGKLKNPKKVFQQYGGEGESKVGAKEGTQFLRWRIGIMEKSLSFADFTDPSNNKIAQVHDYNNVSMLRMDPNVKASTKQIISIFGANYPELLSVKFFINVPVFMGWVFSFLKKMGIISAETLKKFQVLSNGNLSEWFGKDNLPAEYNGGKSTKFSSLEALAEATPEHDIPVYAKIILAQTKDQVIEDTNLSVD</sequence>
<keyword id="KW-0963">Cytoplasm</keyword>
<keyword id="KW-0256">Endoplasmic reticulum</keyword>
<keyword id="KW-0349">Heme</keyword>
<keyword id="KW-0408">Iron</keyword>
<keyword id="KW-0445">Lipid transport</keyword>
<keyword id="KW-0472">Membrane</keyword>
<keyword id="KW-0479">Metal-binding</keyword>
<keyword id="KW-0492">Microsome</keyword>
<keyword id="KW-1185">Reference proteome</keyword>
<keyword id="KW-0813">Transport</keyword>
<proteinExistence type="inferred from homology"/>
<reference key="1">
    <citation type="journal article" date="2004" name="Nature">
        <title>Genome evolution in yeasts.</title>
        <authorList>
            <person name="Dujon B."/>
            <person name="Sherman D."/>
            <person name="Fischer G."/>
            <person name="Durrens P."/>
            <person name="Casaregola S."/>
            <person name="Lafontaine I."/>
            <person name="de Montigny J."/>
            <person name="Marck C."/>
            <person name="Neuveglise C."/>
            <person name="Talla E."/>
            <person name="Goffard N."/>
            <person name="Frangeul L."/>
            <person name="Aigle M."/>
            <person name="Anthouard V."/>
            <person name="Babour A."/>
            <person name="Barbe V."/>
            <person name="Barnay S."/>
            <person name="Blanchin S."/>
            <person name="Beckerich J.-M."/>
            <person name="Beyne E."/>
            <person name="Bleykasten C."/>
            <person name="Boisrame A."/>
            <person name="Boyer J."/>
            <person name="Cattolico L."/>
            <person name="Confanioleri F."/>
            <person name="de Daruvar A."/>
            <person name="Despons L."/>
            <person name="Fabre E."/>
            <person name="Fairhead C."/>
            <person name="Ferry-Dumazet H."/>
            <person name="Groppi A."/>
            <person name="Hantraye F."/>
            <person name="Hennequin C."/>
            <person name="Jauniaux N."/>
            <person name="Joyet P."/>
            <person name="Kachouri R."/>
            <person name="Kerrest A."/>
            <person name="Koszul R."/>
            <person name="Lemaire M."/>
            <person name="Lesur I."/>
            <person name="Ma L."/>
            <person name="Muller H."/>
            <person name="Nicaud J.-M."/>
            <person name="Nikolski M."/>
            <person name="Oztas S."/>
            <person name="Ozier-Kalogeropoulos O."/>
            <person name="Pellenz S."/>
            <person name="Potier S."/>
            <person name="Richard G.-F."/>
            <person name="Straub M.-L."/>
            <person name="Suleau A."/>
            <person name="Swennen D."/>
            <person name="Tekaia F."/>
            <person name="Wesolowski-Louvel M."/>
            <person name="Westhof E."/>
            <person name="Wirth B."/>
            <person name="Zeniou-Meyer M."/>
            <person name="Zivanovic Y."/>
            <person name="Bolotin-Fukuhara M."/>
            <person name="Thierry A."/>
            <person name="Bouchier C."/>
            <person name="Caudron B."/>
            <person name="Scarpelli C."/>
            <person name="Gaillardin C."/>
            <person name="Weissenbach J."/>
            <person name="Wincker P."/>
            <person name="Souciet J.-L."/>
        </authorList>
    </citation>
    <scope>NUCLEOTIDE SEQUENCE [LARGE SCALE GENOMIC DNA]</scope>
    <source>
        <strain>ATCC 36239 / CBS 767 / BCRC 21394 / JCM 1990 / NBRC 0083 / IGC 2968</strain>
    </source>
</reference>
<dbReference type="EMBL" id="CR382134">
    <property type="protein sequence ID" value="CAG85478.2"/>
    <property type="molecule type" value="Genomic_DNA"/>
</dbReference>
<dbReference type="RefSeq" id="XP_457474.2">
    <property type="nucleotide sequence ID" value="XM_457474.1"/>
</dbReference>
<dbReference type="SMR" id="Q6BWE5"/>
<dbReference type="FunCoup" id="Q6BWE5">
    <property type="interactions" value="48"/>
</dbReference>
<dbReference type="STRING" id="284592.Q6BWE5"/>
<dbReference type="GeneID" id="2913425"/>
<dbReference type="KEGG" id="dha:DEHA2B11968g"/>
<dbReference type="VEuPathDB" id="FungiDB:DEHA2B11968g"/>
<dbReference type="eggNOG" id="KOG1471">
    <property type="taxonomic scope" value="Eukaryota"/>
</dbReference>
<dbReference type="HOGENOM" id="CLU_045138_0_1_1"/>
<dbReference type="InParanoid" id="Q6BWE5"/>
<dbReference type="OMA" id="MVQIHDY"/>
<dbReference type="OrthoDB" id="75724at2759"/>
<dbReference type="Proteomes" id="UP000000599">
    <property type="component" value="Chromosome B"/>
</dbReference>
<dbReference type="GO" id="GO:0032541">
    <property type="term" value="C:cortical endoplasmic reticulum"/>
    <property type="evidence" value="ECO:0007669"/>
    <property type="project" value="EnsemblFungi"/>
</dbReference>
<dbReference type="GO" id="GO:0005829">
    <property type="term" value="C:cytosol"/>
    <property type="evidence" value="ECO:0007669"/>
    <property type="project" value="EnsemblFungi"/>
</dbReference>
<dbReference type="GO" id="GO:0005789">
    <property type="term" value="C:endoplasmic reticulum membrane"/>
    <property type="evidence" value="ECO:0007669"/>
    <property type="project" value="UniProtKB-SubCell"/>
</dbReference>
<dbReference type="GO" id="GO:0005886">
    <property type="term" value="C:plasma membrane"/>
    <property type="evidence" value="ECO:0007669"/>
    <property type="project" value="EnsemblFungi"/>
</dbReference>
<dbReference type="GO" id="GO:0020037">
    <property type="term" value="F:heme binding"/>
    <property type="evidence" value="ECO:0007669"/>
    <property type="project" value="EnsemblFungi"/>
</dbReference>
<dbReference type="GO" id="GO:0046872">
    <property type="term" value="F:metal ion binding"/>
    <property type="evidence" value="ECO:0007669"/>
    <property type="project" value="UniProtKB-KW"/>
</dbReference>
<dbReference type="GO" id="GO:0008526">
    <property type="term" value="F:phosphatidylinositol transfer activity"/>
    <property type="evidence" value="ECO:0007669"/>
    <property type="project" value="EnsemblFungi"/>
</dbReference>
<dbReference type="GO" id="GO:0043001">
    <property type="term" value="P:Golgi to plasma membrane protein transport"/>
    <property type="evidence" value="ECO:0007669"/>
    <property type="project" value="EnsemblFungi"/>
</dbReference>
<dbReference type="GO" id="GO:0046488">
    <property type="term" value="P:phosphatidylinositol metabolic process"/>
    <property type="evidence" value="ECO:0007669"/>
    <property type="project" value="EnsemblFungi"/>
</dbReference>
<dbReference type="GO" id="GO:2000114">
    <property type="term" value="P:regulation of establishment of cell polarity"/>
    <property type="evidence" value="ECO:0007669"/>
    <property type="project" value="EnsemblFungi"/>
</dbReference>
<dbReference type="GO" id="GO:0017157">
    <property type="term" value="P:regulation of exocytosis"/>
    <property type="evidence" value="ECO:0007669"/>
    <property type="project" value="EnsemblFungi"/>
</dbReference>
<dbReference type="CDD" id="cd00170">
    <property type="entry name" value="SEC14"/>
    <property type="match status" value="1"/>
</dbReference>
<dbReference type="Gene3D" id="3.40.525.10">
    <property type="entry name" value="CRAL-TRIO lipid binding domain"/>
    <property type="match status" value="1"/>
</dbReference>
<dbReference type="InterPro" id="IPR001251">
    <property type="entry name" value="CRAL-TRIO_dom"/>
</dbReference>
<dbReference type="InterPro" id="IPR036865">
    <property type="entry name" value="CRAL-TRIO_dom_sf"/>
</dbReference>
<dbReference type="InterPro" id="IPR036273">
    <property type="entry name" value="CRAL/TRIO_N_dom_sf"/>
</dbReference>
<dbReference type="InterPro" id="IPR042938">
    <property type="entry name" value="Sfh5"/>
</dbReference>
<dbReference type="PANTHER" id="PTHR47669">
    <property type="entry name" value="PHOSPHATIDYLINOSITOL TRANSFER PROTEIN SFH5"/>
    <property type="match status" value="1"/>
</dbReference>
<dbReference type="PANTHER" id="PTHR47669:SF1">
    <property type="entry name" value="PHOSPHATIDYLINOSITOL TRANSFER PROTEIN SFH5"/>
    <property type="match status" value="1"/>
</dbReference>
<dbReference type="Pfam" id="PF00650">
    <property type="entry name" value="CRAL_TRIO"/>
    <property type="match status" value="1"/>
</dbReference>
<dbReference type="SMART" id="SM00516">
    <property type="entry name" value="SEC14"/>
    <property type="match status" value="1"/>
</dbReference>
<dbReference type="SUPFAM" id="SSF52087">
    <property type="entry name" value="CRAL/TRIO domain"/>
    <property type="match status" value="1"/>
</dbReference>
<dbReference type="SUPFAM" id="SSF46938">
    <property type="entry name" value="CRAL/TRIO N-terminal domain"/>
    <property type="match status" value="1"/>
</dbReference>
<dbReference type="PROSITE" id="PS50191">
    <property type="entry name" value="CRAL_TRIO"/>
    <property type="match status" value="1"/>
</dbReference>
<evidence type="ECO:0000250" key="1">
    <source>
        <dbReference type="UniProtKB" id="A6ZQI5"/>
    </source>
</evidence>
<evidence type="ECO:0000250" key="2">
    <source>
        <dbReference type="UniProtKB" id="P47008"/>
    </source>
</evidence>
<evidence type="ECO:0000255" key="3">
    <source>
        <dbReference type="PROSITE-ProRule" id="PRU00056"/>
    </source>
</evidence>
<evidence type="ECO:0000305" key="4"/>
<comment type="function">
    <text evidence="2">Non-classical phosphatidylinositol (PtdIns) transfer protein (PITP), which exhibits PtdIns-binding/transfer activity in the absence of detectable PtdCho-binding/transfer activity. Regulates PtdIns(4,5)P2 homeostasis at the plasma membrane. Heme-binding protein that may play a role in organic oxidant-induced stress responses.</text>
</comment>
<comment type="catalytic activity">
    <reaction evidence="2">
        <text>a 1,2-diacyl-sn-glycero-3-phospho-(1D-myo-inositol)(in) = a 1,2-diacyl-sn-glycero-3-phospho-(1D-myo-inositol)(out)</text>
        <dbReference type="Rhea" id="RHEA:38691"/>
        <dbReference type="ChEBI" id="CHEBI:57880"/>
    </reaction>
    <physiologicalReaction direction="left-to-right" evidence="2">
        <dbReference type="Rhea" id="RHEA:38692"/>
    </physiologicalReaction>
</comment>
<comment type="cofactor">
    <cofactor evidence="1">
        <name>heme b</name>
        <dbReference type="ChEBI" id="CHEBI:60344"/>
    </cofactor>
</comment>
<comment type="subcellular location">
    <subcellularLocation>
        <location evidence="2">Cytoplasm</location>
    </subcellularLocation>
    <subcellularLocation>
        <location evidence="2">Endoplasmic reticulum membrane</location>
        <topology evidence="2">Peripheral membrane protein</topology>
    </subcellularLocation>
    <subcellularLocation>
        <location evidence="2">Microsome membrane</location>
        <topology evidence="2">Peripheral membrane protein</topology>
    </subcellularLocation>
</comment>
<comment type="similarity">
    <text evidence="4">Belongs to the SFH5 family.</text>
</comment>
<feature type="chain" id="PRO_0000324978" description="Phosphatidylinositol transfer protein SFH5">
    <location>
        <begin position="1"/>
        <end position="344"/>
    </location>
</feature>
<feature type="domain" description="CRAL-TRIO" evidence="3">
    <location>
        <begin position="139"/>
        <end position="305"/>
    </location>
</feature>
<feature type="binding site" evidence="1">
    <location>
        <position position="152"/>
    </location>
    <ligand>
        <name>heme</name>
        <dbReference type="ChEBI" id="CHEBI:30413"/>
    </ligand>
</feature>
<feature type="binding site" evidence="1">
    <location>
        <position position="185"/>
    </location>
    <ligand>
        <name>heme</name>
        <dbReference type="ChEBI" id="CHEBI:30413"/>
    </ligand>
</feature>
<feature type="binding site" evidence="1">
    <location>
        <position position="210"/>
    </location>
    <ligand>
        <name>heme</name>
        <dbReference type="ChEBI" id="CHEBI:30413"/>
    </ligand>
</feature>
<feature type="binding site" description="proximal binding residue" evidence="1">
    <location>
        <position position="212"/>
    </location>
    <ligand>
        <name>heme</name>
        <dbReference type="ChEBI" id="CHEBI:30413"/>
    </ligand>
    <ligandPart>
        <name>Fe</name>
        <dbReference type="ChEBI" id="CHEBI:18248"/>
    </ligandPart>
</feature>
<feature type="binding site" evidence="1">
    <location>
        <position position="246"/>
    </location>
    <ligand>
        <name>heme</name>
        <dbReference type="ChEBI" id="CHEBI:30413"/>
    </ligand>
</feature>